<gene>
    <name type="primary">CCOAOMT</name>
</gene>
<name>CAMT_SOLTU</name>
<protein>
    <recommendedName>
        <fullName>Caffeoyl-CoA O-methyltransferase</fullName>
        <ecNumber>2.1.1.104</ecNumber>
    </recommendedName>
    <alternativeName>
        <fullName>Trans-caffeoyl-CoA 3-O-methyltransferase</fullName>
        <shortName>CCoAMT</shortName>
        <shortName>CCoAOMT</shortName>
    </alternativeName>
</protein>
<dbReference type="EC" id="2.1.1.104"/>
<dbReference type="EMBL" id="AB061268">
    <property type="protein sequence ID" value="BAC23054.1"/>
    <property type="molecule type" value="mRNA"/>
</dbReference>
<dbReference type="RefSeq" id="NP_001305508.1">
    <property type="nucleotide sequence ID" value="NM_001318579.1"/>
</dbReference>
<dbReference type="SMR" id="Q8H9B6"/>
<dbReference type="FunCoup" id="Q8H9B6">
    <property type="interactions" value="1106"/>
</dbReference>
<dbReference type="STRING" id="4113.Q8H9B6"/>
<dbReference type="GeneID" id="102586657"/>
<dbReference type="KEGG" id="sot:102586657"/>
<dbReference type="InParanoid" id="Q8H9B6"/>
<dbReference type="OrthoDB" id="10251242at2759"/>
<dbReference type="UniPathway" id="UPA00711"/>
<dbReference type="Proteomes" id="UP000011115">
    <property type="component" value="Unassembled WGS sequence"/>
</dbReference>
<dbReference type="ExpressionAtlas" id="Q8H9B6">
    <property type="expression patterns" value="baseline"/>
</dbReference>
<dbReference type="GO" id="GO:0042409">
    <property type="term" value="F:caffeoyl-CoA O-methyltransferase activity"/>
    <property type="evidence" value="ECO:0007669"/>
    <property type="project" value="UniProtKB-EC"/>
</dbReference>
<dbReference type="GO" id="GO:0046872">
    <property type="term" value="F:metal ion binding"/>
    <property type="evidence" value="ECO:0007669"/>
    <property type="project" value="UniProtKB-KW"/>
</dbReference>
<dbReference type="GO" id="GO:0008757">
    <property type="term" value="F:S-adenosylmethionine-dependent methyltransferase activity"/>
    <property type="evidence" value="ECO:0000318"/>
    <property type="project" value="GO_Central"/>
</dbReference>
<dbReference type="GO" id="GO:0009809">
    <property type="term" value="P:lignin biosynthetic process"/>
    <property type="evidence" value="ECO:0007669"/>
    <property type="project" value="UniProtKB-KW"/>
</dbReference>
<dbReference type="GO" id="GO:0032259">
    <property type="term" value="P:methylation"/>
    <property type="evidence" value="ECO:0007669"/>
    <property type="project" value="UniProtKB-KW"/>
</dbReference>
<dbReference type="CDD" id="cd02440">
    <property type="entry name" value="AdoMet_MTases"/>
    <property type="match status" value="1"/>
</dbReference>
<dbReference type="FunFam" id="3.40.50.150:FF:000147">
    <property type="entry name" value="Caffeoyl-CoA O-methyltransferase 1"/>
    <property type="match status" value="1"/>
</dbReference>
<dbReference type="Gene3D" id="3.40.50.150">
    <property type="entry name" value="Vaccinia Virus protein VP39"/>
    <property type="match status" value="1"/>
</dbReference>
<dbReference type="InterPro" id="IPR050362">
    <property type="entry name" value="Cation-dep_OMT"/>
</dbReference>
<dbReference type="InterPro" id="IPR029063">
    <property type="entry name" value="SAM-dependent_MTases_sf"/>
</dbReference>
<dbReference type="InterPro" id="IPR002935">
    <property type="entry name" value="SAM_O-MeTrfase"/>
</dbReference>
<dbReference type="PANTHER" id="PTHR10509:SF74">
    <property type="entry name" value="CAFFEOYL-COA O-METHYLTRANSFERASE 2"/>
    <property type="match status" value="1"/>
</dbReference>
<dbReference type="PANTHER" id="PTHR10509">
    <property type="entry name" value="O-METHYLTRANSFERASE-RELATED"/>
    <property type="match status" value="1"/>
</dbReference>
<dbReference type="Pfam" id="PF01596">
    <property type="entry name" value="Methyltransf_3"/>
    <property type="match status" value="1"/>
</dbReference>
<dbReference type="SUPFAM" id="SSF53335">
    <property type="entry name" value="S-adenosyl-L-methionine-dependent methyltransferases"/>
    <property type="match status" value="1"/>
</dbReference>
<dbReference type="PROSITE" id="PS51682">
    <property type="entry name" value="SAM_OMT_I"/>
    <property type="match status" value="1"/>
</dbReference>
<comment type="function">
    <text>Methylates caffeoyl-CoA to feruloyl-CoA and 5-hydroxyferuloyl-CoA to sinapoyl-CoA. Plays a role in the synthesis of feruloylated polysaccharides. Involved in the reinforcement of the plant cell wall. Also involved in the responding to wounding or pathogen challenge by the increased formation of cell wall-bound ferulic acid polymers.</text>
</comment>
<comment type="catalytic activity">
    <reaction>
        <text>(E)-caffeoyl-CoA + S-adenosyl-L-methionine = (E)-feruloyl-CoA + S-adenosyl-L-homocysteine + H(+)</text>
        <dbReference type="Rhea" id="RHEA:16925"/>
        <dbReference type="ChEBI" id="CHEBI:15378"/>
        <dbReference type="ChEBI" id="CHEBI:57856"/>
        <dbReference type="ChEBI" id="CHEBI:59789"/>
        <dbReference type="ChEBI" id="CHEBI:87136"/>
        <dbReference type="ChEBI" id="CHEBI:87305"/>
        <dbReference type="EC" id="2.1.1.104"/>
    </reaction>
</comment>
<comment type="cofactor">
    <cofactor evidence="1">
        <name>a divalent metal cation</name>
        <dbReference type="ChEBI" id="CHEBI:60240"/>
    </cofactor>
    <text evidence="1">Binds 1 divalent metal cation per subunit.</text>
</comment>
<comment type="pathway">
    <text>Aromatic compound metabolism; phenylpropanoid biosynthesis.</text>
</comment>
<comment type="similarity">
    <text evidence="2">Belongs to the class I-like SAM-binding methyltransferase superfamily. Cation-dependent O-methyltransferase family. CCoAMT subfamily.</text>
</comment>
<feature type="chain" id="PRO_0000165695" description="Caffeoyl-CoA O-methyltransferase">
    <location>
        <begin position="1"/>
        <end position="242"/>
    </location>
</feature>
<feature type="binding site" evidence="1">
    <location>
        <position position="16"/>
    </location>
    <ligand>
        <name>substrate</name>
    </ligand>
</feature>
<feature type="binding site" evidence="2">
    <location>
        <position position="58"/>
    </location>
    <ligand>
        <name>S-adenosyl-L-methionine</name>
        <dbReference type="ChEBI" id="CHEBI:59789"/>
    </ligand>
</feature>
<feature type="binding site" evidence="2">
    <location>
        <position position="80"/>
    </location>
    <ligand>
        <name>S-adenosyl-L-methionine</name>
        <dbReference type="ChEBI" id="CHEBI:59789"/>
    </ligand>
</feature>
<feature type="binding site" evidence="2">
    <location>
        <begin position="82"/>
        <end position="83"/>
    </location>
    <ligand>
        <name>S-adenosyl-L-methionine</name>
        <dbReference type="ChEBI" id="CHEBI:59789"/>
    </ligand>
</feature>
<feature type="binding site" evidence="2">
    <location>
        <position position="88"/>
    </location>
    <ligand>
        <name>S-adenosyl-L-methionine</name>
        <dbReference type="ChEBI" id="CHEBI:59789"/>
    </ligand>
</feature>
<feature type="binding site" evidence="2">
    <location>
        <position position="106"/>
    </location>
    <ligand>
        <name>S-adenosyl-L-methionine</name>
        <dbReference type="ChEBI" id="CHEBI:59789"/>
    </ligand>
</feature>
<feature type="binding site" evidence="2">
    <location>
        <position position="135"/>
    </location>
    <ligand>
        <name>S-adenosyl-L-methionine</name>
        <dbReference type="ChEBI" id="CHEBI:59789"/>
    </ligand>
</feature>
<feature type="binding site" evidence="2">
    <location>
        <position position="158"/>
    </location>
    <ligand>
        <name>a divalent metal cation</name>
        <dbReference type="ChEBI" id="CHEBI:60240"/>
    </ligand>
</feature>
<feature type="binding site" evidence="1">
    <location>
        <position position="158"/>
    </location>
    <ligand>
        <name>substrate</name>
    </ligand>
</feature>
<feature type="binding site" evidence="2">
    <location>
        <position position="160"/>
    </location>
    <ligand>
        <name>S-adenosyl-L-methionine</name>
        <dbReference type="ChEBI" id="CHEBI:59789"/>
    </ligand>
</feature>
<feature type="binding site" evidence="2">
    <location>
        <position position="184"/>
    </location>
    <ligand>
        <name>a divalent metal cation</name>
        <dbReference type="ChEBI" id="CHEBI:60240"/>
    </ligand>
</feature>
<feature type="binding site" evidence="2">
    <location>
        <position position="185"/>
    </location>
    <ligand>
        <name>a divalent metal cation</name>
        <dbReference type="ChEBI" id="CHEBI:60240"/>
    </ligand>
</feature>
<feature type="binding site" evidence="1">
    <location>
        <position position="189"/>
    </location>
    <ligand>
        <name>substrate</name>
    </ligand>
</feature>
<sequence length="242" mass="27262">MASNGENGRHQEVGHKSLLQSDALYQYILETSVYPREPEAMKELREITAKHPWNLMTTSADEGQFLNMLLKLINAKNTMEIGVFTGYSLLATAMALPDDGKILAMDINRENYEIGLPVIEKAGLAHKIDFREGPALPVLDQMIEDGKYHGSYDFIFVDADKDNYLNYHKRLIDLVKVGGLIGYDNTLWNGSVVAPPDAPLRKYVRYYRDFVLELNKALAADPRIEICQLPVGDGITLCRRIS</sequence>
<accession>Q8H9B6</accession>
<organism>
    <name type="scientific">Solanum tuberosum</name>
    <name type="common">Potato</name>
    <dbReference type="NCBI Taxonomy" id="4113"/>
    <lineage>
        <taxon>Eukaryota</taxon>
        <taxon>Viridiplantae</taxon>
        <taxon>Streptophyta</taxon>
        <taxon>Embryophyta</taxon>
        <taxon>Tracheophyta</taxon>
        <taxon>Spermatophyta</taxon>
        <taxon>Magnoliopsida</taxon>
        <taxon>eudicotyledons</taxon>
        <taxon>Gunneridae</taxon>
        <taxon>Pentapetalae</taxon>
        <taxon>asterids</taxon>
        <taxon>lamiids</taxon>
        <taxon>Solanales</taxon>
        <taxon>Solanaceae</taxon>
        <taxon>Solanoideae</taxon>
        <taxon>Solaneae</taxon>
        <taxon>Solanum</taxon>
    </lineage>
</organism>
<reference key="1">
    <citation type="submission" date="2001-05" db="EMBL/GenBank/DDBJ databases">
        <title>Elicitation of the primary and secondary metabolisms during defense in potato.</title>
        <authorList>
            <person name="Nakane E."/>
            <person name="Yoshioka H."/>
            <person name="Kawakita K."/>
            <person name="Doke N."/>
        </authorList>
    </citation>
    <scope>NUCLEOTIDE SEQUENCE [MRNA]</scope>
</reference>
<keyword id="KW-0438">Lignin biosynthesis</keyword>
<keyword id="KW-0479">Metal-binding</keyword>
<keyword id="KW-0489">Methyltransferase</keyword>
<keyword id="KW-1185">Reference proteome</keyword>
<keyword id="KW-0949">S-adenosyl-L-methionine</keyword>
<keyword id="KW-0808">Transferase</keyword>
<proteinExistence type="evidence at transcript level"/>
<evidence type="ECO:0000250" key="1">
    <source>
        <dbReference type="UniProtKB" id="Q40313"/>
    </source>
</evidence>
<evidence type="ECO:0000255" key="2">
    <source>
        <dbReference type="PROSITE-ProRule" id="PRU01019"/>
    </source>
</evidence>